<protein>
    <recommendedName>
        <fullName>UTP--glucose-1-phosphate uridylyltransferase</fullName>
        <ecNumber>2.7.7.9</ecNumber>
    </recommendedName>
    <alternativeName>
        <fullName>Alpha-D-glucosyl-1-phosphate uridylyltransferase</fullName>
    </alternativeName>
    <alternativeName>
        <fullName>UDP-glucose pyrophosphorylase</fullName>
        <shortName>UDPGP</shortName>
    </alternativeName>
    <alternativeName>
        <fullName>Uridine diphosphoglucose pyrophosphorylase</fullName>
    </alternativeName>
</protein>
<gene>
    <name type="primary">gtaB</name>
    <name type="ordered locus">MW2419</name>
</gene>
<sequence>MKKIKKAIIPAAGLGTRFLPATKAMPKEMLPILDKPTIQYIVEEAARAGIEDIIIVTGRHKRAIEDHFDSQKELEMVLKEKGKSELLEKVQYSTELANIFYVRQKEQKGLGHAISSARQFIGNEPFAVLLGDDIVESEVPAVKQLIDVYEETGHSVIGVQEVPEADTHRYGIIDPLTKNGRQYEVKKFVEKPAQGTAPSNLAIMGRYVLTPEIFDYLKTQKEGAGNEIQLTDAIERMNNDNQVYAYDFEGERYDVGEKLGFVKTTIEYALKDDSMREELTRFIKELGL</sequence>
<evidence type="ECO:0000250" key="1"/>
<evidence type="ECO:0000305" key="2"/>
<dbReference type="EC" id="2.7.7.9"/>
<dbReference type="EMBL" id="BA000033">
    <property type="protein sequence ID" value="BAB96284.1"/>
    <property type="molecule type" value="Genomic_DNA"/>
</dbReference>
<dbReference type="SMR" id="Q8NUU9"/>
<dbReference type="KEGG" id="sam:MW2419"/>
<dbReference type="HOGENOM" id="CLU_029499_1_2_9"/>
<dbReference type="UniPathway" id="UPA00894"/>
<dbReference type="GO" id="GO:0003983">
    <property type="term" value="F:UTP:glucose-1-phosphate uridylyltransferase activity"/>
    <property type="evidence" value="ECO:0007669"/>
    <property type="project" value="UniProtKB-EC"/>
</dbReference>
<dbReference type="GO" id="GO:0009246">
    <property type="term" value="P:enterobacterial common antigen biosynthetic process"/>
    <property type="evidence" value="ECO:0007669"/>
    <property type="project" value="UniProtKB-UniPathway"/>
</dbReference>
<dbReference type="GO" id="GO:0006011">
    <property type="term" value="P:UDP-alpha-D-glucose metabolic process"/>
    <property type="evidence" value="ECO:0007669"/>
    <property type="project" value="InterPro"/>
</dbReference>
<dbReference type="CDD" id="cd02541">
    <property type="entry name" value="UGPase_prokaryotic"/>
    <property type="match status" value="1"/>
</dbReference>
<dbReference type="Gene3D" id="3.90.550.10">
    <property type="entry name" value="Spore Coat Polysaccharide Biosynthesis Protein SpsA, Chain A"/>
    <property type="match status" value="1"/>
</dbReference>
<dbReference type="InterPro" id="IPR005771">
    <property type="entry name" value="GalU_uridylyltTrfase_bac/arc"/>
</dbReference>
<dbReference type="InterPro" id="IPR005835">
    <property type="entry name" value="NTP_transferase_dom"/>
</dbReference>
<dbReference type="InterPro" id="IPR029044">
    <property type="entry name" value="Nucleotide-diphossugar_trans"/>
</dbReference>
<dbReference type="NCBIfam" id="TIGR01099">
    <property type="entry name" value="galU"/>
    <property type="match status" value="1"/>
</dbReference>
<dbReference type="PANTHER" id="PTHR43197">
    <property type="entry name" value="UTP--GLUCOSE-1-PHOSPHATE URIDYLYLTRANSFERASE"/>
    <property type="match status" value="1"/>
</dbReference>
<dbReference type="PANTHER" id="PTHR43197:SF1">
    <property type="entry name" value="UTP--GLUCOSE-1-PHOSPHATE URIDYLYLTRANSFERASE"/>
    <property type="match status" value="1"/>
</dbReference>
<dbReference type="Pfam" id="PF00483">
    <property type="entry name" value="NTP_transferase"/>
    <property type="match status" value="1"/>
</dbReference>
<dbReference type="SUPFAM" id="SSF53448">
    <property type="entry name" value="Nucleotide-diphospho-sugar transferases"/>
    <property type="match status" value="1"/>
</dbReference>
<organism>
    <name type="scientific">Staphylococcus aureus (strain MW2)</name>
    <dbReference type="NCBI Taxonomy" id="196620"/>
    <lineage>
        <taxon>Bacteria</taxon>
        <taxon>Bacillati</taxon>
        <taxon>Bacillota</taxon>
        <taxon>Bacilli</taxon>
        <taxon>Bacillales</taxon>
        <taxon>Staphylococcaceae</taxon>
        <taxon>Staphylococcus</taxon>
    </lineage>
</organism>
<feature type="chain" id="PRO_0000308309" description="UTP--glucose-1-phosphate uridylyltransferase">
    <location>
        <begin position="1"/>
        <end position="288"/>
    </location>
</feature>
<comment type="function">
    <text evidence="1">Catalyzes the formation of UDP-glucose from glucose-1-phosphate and UTP. This is an intermediate step in the biosynthesis of diglucosyl-diacylglycerol (Glc2-DAG), i.e. the predominant glycolipid found in the S.aureus membrane, which is also used as a membrane anchor for lipoteichoic acid (LTA) (By similarity).</text>
</comment>
<comment type="catalytic activity">
    <reaction>
        <text>alpha-D-glucose 1-phosphate + UTP + H(+) = UDP-alpha-D-glucose + diphosphate</text>
        <dbReference type="Rhea" id="RHEA:19889"/>
        <dbReference type="ChEBI" id="CHEBI:15378"/>
        <dbReference type="ChEBI" id="CHEBI:33019"/>
        <dbReference type="ChEBI" id="CHEBI:46398"/>
        <dbReference type="ChEBI" id="CHEBI:58601"/>
        <dbReference type="ChEBI" id="CHEBI:58885"/>
        <dbReference type="EC" id="2.7.7.9"/>
    </reaction>
</comment>
<comment type="pathway">
    <text>Glycolipid metabolism; diglucosyl-diacylglycerol biosynthesis.</text>
</comment>
<comment type="similarity">
    <text evidence="2">Belongs to the UDPGP type 2 family.</text>
</comment>
<proteinExistence type="inferred from homology"/>
<accession>Q8NUU9</accession>
<keyword id="KW-0119">Carbohydrate metabolism</keyword>
<keyword id="KW-0548">Nucleotidyltransferase</keyword>
<keyword id="KW-0808">Transferase</keyword>
<reference key="1">
    <citation type="journal article" date="2002" name="Lancet">
        <title>Genome and virulence determinants of high virulence community-acquired MRSA.</title>
        <authorList>
            <person name="Baba T."/>
            <person name="Takeuchi F."/>
            <person name="Kuroda M."/>
            <person name="Yuzawa H."/>
            <person name="Aoki K."/>
            <person name="Oguchi A."/>
            <person name="Nagai Y."/>
            <person name="Iwama N."/>
            <person name="Asano K."/>
            <person name="Naimi T."/>
            <person name="Kuroda H."/>
            <person name="Cui L."/>
            <person name="Yamamoto K."/>
            <person name="Hiramatsu K."/>
        </authorList>
    </citation>
    <scope>NUCLEOTIDE SEQUENCE [LARGE SCALE GENOMIC DNA]</scope>
    <source>
        <strain>MW2</strain>
    </source>
</reference>
<name>GTAB_STAAW</name>